<feature type="chain" id="PRO_0000164539" description="D-aminoacyl-tRNA deacylase">
    <location>
        <begin position="1"/>
        <end position="145"/>
    </location>
</feature>
<feature type="short sequence motif" description="Gly-cisPro motif, important for rejection of L-amino acids" evidence="1">
    <location>
        <begin position="137"/>
        <end position="138"/>
    </location>
</feature>
<sequence length="145" mass="15950">MIALIQRVTRASVTVEGEVTGEIGAGLLVLLGVEKDDDEQKANRLCERVLGYRIFSDAEGKMNLNVQQAGGSVLVVSQFTLAADTERGMRPSFSKGASPDRAEALYDYFVERCRQQEMNTQTGRFAADMQVSLVNDGPVTFWLQV</sequence>
<dbReference type="EC" id="3.1.1.96" evidence="1"/>
<dbReference type="EMBL" id="AE005174">
    <property type="protein sequence ID" value="AAG59077.1"/>
    <property type="molecule type" value="Genomic_DNA"/>
</dbReference>
<dbReference type="EMBL" id="BA000007">
    <property type="protein sequence ID" value="BAB38233.1"/>
    <property type="molecule type" value="Genomic_DNA"/>
</dbReference>
<dbReference type="PIR" id="A86077">
    <property type="entry name" value="A86077"/>
</dbReference>
<dbReference type="PIR" id="B91230">
    <property type="entry name" value="B91230"/>
</dbReference>
<dbReference type="RefSeq" id="NP_312837.1">
    <property type="nucleotide sequence ID" value="NC_002695.1"/>
</dbReference>
<dbReference type="RefSeq" id="WP_000560983.1">
    <property type="nucleotide sequence ID" value="NZ_VOAI01000016.1"/>
</dbReference>
<dbReference type="SMR" id="P0A6M6"/>
<dbReference type="STRING" id="155864.Z5426"/>
<dbReference type="GeneID" id="915087"/>
<dbReference type="GeneID" id="93778051"/>
<dbReference type="KEGG" id="ece:Z5426"/>
<dbReference type="KEGG" id="ecs:ECs_4810"/>
<dbReference type="PATRIC" id="fig|386585.9.peg.5025"/>
<dbReference type="eggNOG" id="COG1490">
    <property type="taxonomic scope" value="Bacteria"/>
</dbReference>
<dbReference type="HOGENOM" id="CLU_076901_1_0_6"/>
<dbReference type="OMA" id="VFGADMK"/>
<dbReference type="Proteomes" id="UP000000558">
    <property type="component" value="Chromosome"/>
</dbReference>
<dbReference type="Proteomes" id="UP000002519">
    <property type="component" value="Chromosome"/>
</dbReference>
<dbReference type="GO" id="GO:0005737">
    <property type="term" value="C:cytoplasm"/>
    <property type="evidence" value="ECO:0007669"/>
    <property type="project" value="UniProtKB-SubCell"/>
</dbReference>
<dbReference type="GO" id="GO:0051500">
    <property type="term" value="F:D-tyrosyl-tRNA(Tyr) deacylase activity"/>
    <property type="evidence" value="ECO:0007669"/>
    <property type="project" value="TreeGrafter"/>
</dbReference>
<dbReference type="GO" id="GO:0106026">
    <property type="term" value="F:Gly-tRNA(Ala) deacylase activity"/>
    <property type="evidence" value="ECO:0007669"/>
    <property type="project" value="UniProtKB-UniRule"/>
</dbReference>
<dbReference type="GO" id="GO:0043908">
    <property type="term" value="F:Ser(Gly)-tRNA(Ala) hydrolase activity"/>
    <property type="evidence" value="ECO:0007669"/>
    <property type="project" value="UniProtKB-UniRule"/>
</dbReference>
<dbReference type="GO" id="GO:0000049">
    <property type="term" value="F:tRNA binding"/>
    <property type="evidence" value="ECO:0007669"/>
    <property type="project" value="UniProtKB-UniRule"/>
</dbReference>
<dbReference type="GO" id="GO:0019478">
    <property type="term" value="P:D-amino acid catabolic process"/>
    <property type="evidence" value="ECO:0007669"/>
    <property type="project" value="UniProtKB-UniRule"/>
</dbReference>
<dbReference type="CDD" id="cd00563">
    <property type="entry name" value="Dtyr_deacylase"/>
    <property type="match status" value="1"/>
</dbReference>
<dbReference type="FunFam" id="3.50.80.10:FF:000001">
    <property type="entry name" value="D-aminoacyl-tRNA deacylase"/>
    <property type="match status" value="1"/>
</dbReference>
<dbReference type="Gene3D" id="3.50.80.10">
    <property type="entry name" value="D-tyrosyl-tRNA(Tyr) deacylase"/>
    <property type="match status" value="1"/>
</dbReference>
<dbReference type="HAMAP" id="MF_00518">
    <property type="entry name" value="Deacylase_Dtd"/>
    <property type="match status" value="1"/>
</dbReference>
<dbReference type="InterPro" id="IPR003732">
    <property type="entry name" value="Daa-tRNA_deacyls_DTD"/>
</dbReference>
<dbReference type="InterPro" id="IPR023509">
    <property type="entry name" value="DTD-like_sf"/>
</dbReference>
<dbReference type="NCBIfam" id="TIGR00256">
    <property type="entry name" value="D-aminoacyl-tRNA deacylase"/>
    <property type="match status" value="1"/>
</dbReference>
<dbReference type="PANTHER" id="PTHR10472:SF5">
    <property type="entry name" value="D-AMINOACYL-TRNA DEACYLASE 1"/>
    <property type="match status" value="1"/>
</dbReference>
<dbReference type="PANTHER" id="PTHR10472">
    <property type="entry name" value="D-TYROSYL-TRNA TYR DEACYLASE"/>
    <property type="match status" value="1"/>
</dbReference>
<dbReference type="Pfam" id="PF02580">
    <property type="entry name" value="Tyr_Deacylase"/>
    <property type="match status" value="1"/>
</dbReference>
<dbReference type="SUPFAM" id="SSF69500">
    <property type="entry name" value="DTD-like"/>
    <property type="match status" value="1"/>
</dbReference>
<evidence type="ECO:0000255" key="1">
    <source>
        <dbReference type="HAMAP-Rule" id="MF_00518"/>
    </source>
</evidence>
<keyword id="KW-0963">Cytoplasm</keyword>
<keyword id="KW-0378">Hydrolase</keyword>
<keyword id="KW-1185">Reference proteome</keyword>
<keyword id="KW-0694">RNA-binding</keyword>
<keyword id="KW-0820">tRNA-binding</keyword>
<comment type="function">
    <text evidence="1">An aminoacyl-tRNA editing enzyme that deacylates mischarged D-aminoacyl-tRNAs. Also deacylates mischarged glycyl-tRNA(Ala), protecting cells against glycine mischarging by AlaRS. Acts via tRNA-based rather than protein-based catalysis; rejects L-amino acids rather than detecting D-amino acids in the active site. By recycling D-aminoacyl-tRNA to D-amino acids and free tRNA molecules, this enzyme counteracts the toxicity associated with the formation of D-aminoacyl-tRNA entities in vivo and helps enforce protein L-homochirality.</text>
</comment>
<comment type="catalytic activity">
    <reaction evidence="1">
        <text>glycyl-tRNA(Ala) + H2O = tRNA(Ala) + glycine + H(+)</text>
        <dbReference type="Rhea" id="RHEA:53744"/>
        <dbReference type="Rhea" id="RHEA-COMP:9657"/>
        <dbReference type="Rhea" id="RHEA-COMP:13640"/>
        <dbReference type="ChEBI" id="CHEBI:15377"/>
        <dbReference type="ChEBI" id="CHEBI:15378"/>
        <dbReference type="ChEBI" id="CHEBI:57305"/>
        <dbReference type="ChEBI" id="CHEBI:78442"/>
        <dbReference type="ChEBI" id="CHEBI:78522"/>
        <dbReference type="EC" id="3.1.1.96"/>
    </reaction>
</comment>
<comment type="catalytic activity">
    <reaction evidence="1">
        <text>a D-aminoacyl-tRNA + H2O = a tRNA + a D-alpha-amino acid + H(+)</text>
        <dbReference type="Rhea" id="RHEA:13953"/>
        <dbReference type="Rhea" id="RHEA-COMP:10123"/>
        <dbReference type="Rhea" id="RHEA-COMP:10124"/>
        <dbReference type="ChEBI" id="CHEBI:15377"/>
        <dbReference type="ChEBI" id="CHEBI:15378"/>
        <dbReference type="ChEBI" id="CHEBI:59871"/>
        <dbReference type="ChEBI" id="CHEBI:78442"/>
        <dbReference type="ChEBI" id="CHEBI:79333"/>
        <dbReference type="EC" id="3.1.1.96"/>
    </reaction>
</comment>
<comment type="subunit">
    <text evidence="1">Homodimer.</text>
</comment>
<comment type="subcellular location">
    <subcellularLocation>
        <location evidence="1">Cytoplasm</location>
    </subcellularLocation>
</comment>
<comment type="domain">
    <text evidence="1">A Gly-cisPro motif from one monomer fits into the active site of the other monomer to allow specific chiral rejection of L-amino acids.</text>
</comment>
<comment type="similarity">
    <text evidence="1">Belongs to the DTD family.</text>
</comment>
<name>DTD_ECO57</name>
<organism>
    <name type="scientific">Escherichia coli O157:H7</name>
    <dbReference type="NCBI Taxonomy" id="83334"/>
    <lineage>
        <taxon>Bacteria</taxon>
        <taxon>Pseudomonadati</taxon>
        <taxon>Pseudomonadota</taxon>
        <taxon>Gammaproteobacteria</taxon>
        <taxon>Enterobacterales</taxon>
        <taxon>Enterobacteriaceae</taxon>
        <taxon>Escherichia</taxon>
    </lineage>
</organism>
<protein>
    <recommendedName>
        <fullName evidence="1">D-aminoacyl-tRNA deacylase</fullName>
        <shortName evidence="1">DTD</shortName>
        <ecNumber evidence="1">3.1.1.96</ecNumber>
    </recommendedName>
    <alternativeName>
        <fullName evidence="1">Gly-tRNA(Ala) deacylase</fullName>
    </alternativeName>
</protein>
<proteinExistence type="inferred from homology"/>
<gene>
    <name evidence="1" type="primary">dtd</name>
    <name type="ordered locus">Z5426</name>
    <name type="ordered locus">ECs4810</name>
</gene>
<accession>P0A6M6</accession>
<accession>P32147</accession>
<reference key="1">
    <citation type="journal article" date="2001" name="Nature">
        <title>Genome sequence of enterohaemorrhagic Escherichia coli O157:H7.</title>
        <authorList>
            <person name="Perna N.T."/>
            <person name="Plunkett G. III"/>
            <person name="Burland V."/>
            <person name="Mau B."/>
            <person name="Glasner J.D."/>
            <person name="Rose D.J."/>
            <person name="Mayhew G.F."/>
            <person name="Evans P.S."/>
            <person name="Gregor J."/>
            <person name="Kirkpatrick H.A."/>
            <person name="Posfai G."/>
            <person name="Hackett J."/>
            <person name="Klink S."/>
            <person name="Boutin A."/>
            <person name="Shao Y."/>
            <person name="Miller L."/>
            <person name="Grotbeck E.J."/>
            <person name="Davis N.W."/>
            <person name="Lim A."/>
            <person name="Dimalanta E.T."/>
            <person name="Potamousis K."/>
            <person name="Apodaca J."/>
            <person name="Anantharaman T.S."/>
            <person name="Lin J."/>
            <person name="Yen G."/>
            <person name="Schwartz D.C."/>
            <person name="Welch R.A."/>
            <person name="Blattner F.R."/>
        </authorList>
    </citation>
    <scope>NUCLEOTIDE SEQUENCE [LARGE SCALE GENOMIC DNA]</scope>
    <source>
        <strain>O157:H7 / EDL933 / ATCC 700927 / EHEC</strain>
    </source>
</reference>
<reference key="2">
    <citation type="journal article" date="2001" name="DNA Res.">
        <title>Complete genome sequence of enterohemorrhagic Escherichia coli O157:H7 and genomic comparison with a laboratory strain K-12.</title>
        <authorList>
            <person name="Hayashi T."/>
            <person name="Makino K."/>
            <person name="Ohnishi M."/>
            <person name="Kurokawa K."/>
            <person name="Ishii K."/>
            <person name="Yokoyama K."/>
            <person name="Han C.-G."/>
            <person name="Ohtsubo E."/>
            <person name="Nakayama K."/>
            <person name="Murata T."/>
            <person name="Tanaka M."/>
            <person name="Tobe T."/>
            <person name="Iida T."/>
            <person name="Takami H."/>
            <person name="Honda T."/>
            <person name="Sasakawa C."/>
            <person name="Ogasawara N."/>
            <person name="Yasunaga T."/>
            <person name="Kuhara S."/>
            <person name="Shiba T."/>
            <person name="Hattori M."/>
            <person name="Shinagawa H."/>
        </authorList>
    </citation>
    <scope>NUCLEOTIDE SEQUENCE [LARGE SCALE GENOMIC DNA]</scope>
    <source>
        <strain>O157:H7 / Sakai / RIMD 0509952 / EHEC</strain>
    </source>
</reference>